<sequence length="617" mass="68593">MKQSKIPIPTLREMPSDAQVISHALMLRAGYVRQVSAGVYSYLPLANRVIEKAKNIMRQEFEKIGAVEMLAPALLSAELWRESGRYETYGEDLYKLKNREKSDFILGPTHEETFTAIVRDSVKSYKQLPLNLYQIQPKYRDEKRPRNGLLRTREFIMKDAYSFHANYDSLDSVYDEYKAAYERIFTRSGLDFKAIIGDGGAMGGKDSQEFMAITSARTDLDRWVVLDKSVASFDEIPAEVQEEIKAELLKWIVSGEDTIAYSSESSYAANLEMATNEYKPSNRVVAEEEVTRVATPDVKSIDEVAAFLNVPEEQTIKTLFYIADGELVAALLVGNDQLNEVKLKNHLGADFFDVASEEEVANVVQAGFGSLGPVGLPENIKIIADRKVQDVRNAVVGANEDGYHLTGVNPGRDFTSEYVDIREVREGEISPDGQGVLNFARGIEIGHIFKLGTRYSASMGADVLDENGRAVPIIMGCYGIGVSRLLSAVMEQHARLFVNKTPKGEYRYAWGINFPKELAPFDVHLITVNVKDEEAQALTEKLEASLMGAGYEVLTDDRNERVGVKFSDSDLIGLPIRITVGKKAADGIVEVKIKATGDTIEVHADNVLETLEILSKK</sequence>
<dbReference type="EC" id="6.1.1.15" evidence="1"/>
<dbReference type="EMBL" id="CP000920">
    <property type="protein sequence ID" value="ACO20486.1"/>
    <property type="molecule type" value="Genomic_DNA"/>
</dbReference>
<dbReference type="RefSeq" id="WP_000814011.1">
    <property type="nucleotide sequence ID" value="NC_012467.1"/>
</dbReference>
<dbReference type="SMR" id="C1CIE5"/>
<dbReference type="KEGG" id="spp:SPP_0314"/>
<dbReference type="HOGENOM" id="CLU_016739_0_0_9"/>
<dbReference type="GO" id="GO:0005829">
    <property type="term" value="C:cytosol"/>
    <property type="evidence" value="ECO:0007669"/>
    <property type="project" value="TreeGrafter"/>
</dbReference>
<dbReference type="GO" id="GO:0002161">
    <property type="term" value="F:aminoacyl-tRNA deacylase activity"/>
    <property type="evidence" value="ECO:0007669"/>
    <property type="project" value="InterPro"/>
</dbReference>
<dbReference type="GO" id="GO:0005524">
    <property type="term" value="F:ATP binding"/>
    <property type="evidence" value="ECO:0007669"/>
    <property type="project" value="UniProtKB-UniRule"/>
</dbReference>
<dbReference type="GO" id="GO:0140096">
    <property type="term" value="F:catalytic activity, acting on a protein"/>
    <property type="evidence" value="ECO:0007669"/>
    <property type="project" value="UniProtKB-ARBA"/>
</dbReference>
<dbReference type="GO" id="GO:0004827">
    <property type="term" value="F:proline-tRNA ligase activity"/>
    <property type="evidence" value="ECO:0007669"/>
    <property type="project" value="UniProtKB-UniRule"/>
</dbReference>
<dbReference type="GO" id="GO:0016740">
    <property type="term" value="F:transferase activity"/>
    <property type="evidence" value="ECO:0007669"/>
    <property type="project" value="UniProtKB-ARBA"/>
</dbReference>
<dbReference type="GO" id="GO:0006433">
    <property type="term" value="P:prolyl-tRNA aminoacylation"/>
    <property type="evidence" value="ECO:0007669"/>
    <property type="project" value="UniProtKB-UniRule"/>
</dbReference>
<dbReference type="CDD" id="cd04334">
    <property type="entry name" value="ProRS-INS"/>
    <property type="match status" value="1"/>
</dbReference>
<dbReference type="CDD" id="cd00861">
    <property type="entry name" value="ProRS_anticodon_short"/>
    <property type="match status" value="1"/>
</dbReference>
<dbReference type="CDD" id="cd00779">
    <property type="entry name" value="ProRS_core_prok"/>
    <property type="match status" value="1"/>
</dbReference>
<dbReference type="FunFam" id="3.30.930.10:FF:000062">
    <property type="entry name" value="Proline--tRNA ligase"/>
    <property type="match status" value="1"/>
</dbReference>
<dbReference type="FunFam" id="3.30.930.10:FF:000070">
    <property type="entry name" value="Proline--tRNA ligase"/>
    <property type="match status" value="1"/>
</dbReference>
<dbReference type="FunFam" id="3.40.50.800:FF:000011">
    <property type="entry name" value="Proline--tRNA ligase"/>
    <property type="match status" value="1"/>
</dbReference>
<dbReference type="FunFam" id="3.90.960.10:FF:000004">
    <property type="entry name" value="Proline--tRNA ligase"/>
    <property type="match status" value="1"/>
</dbReference>
<dbReference type="Gene3D" id="3.40.50.800">
    <property type="entry name" value="Anticodon-binding domain"/>
    <property type="match status" value="1"/>
</dbReference>
<dbReference type="Gene3D" id="3.30.930.10">
    <property type="entry name" value="Bira Bifunctional Protein, Domain 2"/>
    <property type="match status" value="2"/>
</dbReference>
<dbReference type="Gene3D" id="3.90.960.10">
    <property type="entry name" value="YbaK/aminoacyl-tRNA synthetase-associated domain"/>
    <property type="match status" value="1"/>
</dbReference>
<dbReference type="HAMAP" id="MF_01569">
    <property type="entry name" value="Pro_tRNA_synth_type1"/>
    <property type="match status" value="1"/>
</dbReference>
<dbReference type="InterPro" id="IPR002314">
    <property type="entry name" value="aa-tRNA-synt_IIb"/>
</dbReference>
<dbReference type="InterPro" id="IPR006195">
    <property type="entry name" value="aa-tRNA-synth_II"/>
</dbReference>
<dbReference type="InterPro" id="IPR045864">
    <property type="entry name" value="aa-tRNA-synth_II/BPL/LPL"/>
</dbReference>
<dbReference type="InterPro" id="IPR004154">
    <property type="entry name" value="Anticodon-bd"/>
</dbReference>
<dbReference type="InterPro" id="IPR036621">
    <property type="entry name" value="Anticodon-bd_dom_sf"/>
</dbReference>
<dbReference type="InterPro" id="IPR002316">
    <property type="entry name" value="Pro-tRNA-ligase_IIa"/>
</dbReference>
<dbReference type="InterPro" id="IPR004500">
    <property type="entry name" value="Pro-tRNA-synth_IIa_bac-type"/>
</dbReference>
<dbReference type="InterPro" id="IPR023717">
    <property type="entry name" value="Pro-tRNA-Synthase_IIa_type1"/>
</dbReference>
<dbReference type="InterPro" id="IPR050062">
    <property type="entry name" value="Pro-tRNA_synthetase"/>
</dbReference>
<dbReference type="InterPro" id="IPR044140">
    <property type="entry name" value="ProRS_anticodon_short"/>
</dbReference>
<dbReference type="InterPro" id="IPR033730">
    <property type="entry name" value="ProRS_core_prok"/>
</dbReference>
<dbReference type="InterPro" id="IPR036754">
    <property type="entry name" value="YbaK/aa-tRNA-synt-asso_dom_sf"/>
</dbReference>
<dbReference type="InterPro" id="IPR007214">
    <property type="entry name" value="YbaK/aa-tRNA-synth-assoc-dom"/>
</dbReference>
<dbReference type="NCBIfam" id="NF006625">
    <property type="entry name" value="PRK09194.1"/>
    <property type="match status" value="1"/>
</dbReference>
<dbReference type="NCBIfam" id="TIGR00409">
    <property type="entry name" value="proS_fam_II"/>
    <property type="match status" value="2"/>
</dbReference>
<dbReference type="PANTHER" id="PTHR42753">
    <property type="entry name" value="MITOCHONDRIAL RIBOSOME PROTEIN L39/PROLYL-TRNA LIGASE FAMILY MEMBER"/>
    <property type="match status" value="1"/>
</dbReference>
<dbReference type="PANTHER" id="PTHR42753:SF2">
    <property type="entry name" value="PROLINE--TRNA LIGASE"/>
    <property type="match status" value="1"/>
</dbReference>
<dbReference type="Pfam" id="PF03129">
    <property type="entry name" value="HGTP_anticodon"/>
    <property type="match status" value="1"/>
</dbReference>
<dbReference type="Pfam" id="PF00587">
    <property type="entry name" value="tRNA-synt_2b"/>
    <property type="match status" value="1"/>
</dbReference>
<dbReference type="Pfam" id="PF04073">
    <property type="entry name" value="tRNA_edit"/>
    <property type="match status" value="1"/>
</dbReference>
<dbReference type="PRINTS" id="PR01046">
    <property type="entry name" value="TRNASYNTHPRO"/>
</dbReference>
<dbReference type="SUPFAM" id="SSF52954">
    <property type="entry name" value="Class II aaRS ABD-related"/>
    <property type="match status" value="1"/>
</dbReference>
<dbReference type="SUPFAM" id="SSF55681">
    <property type="entry name" value="Class II aaRS and biotin synthetases"/>
    <property type="match status" value="1"/>
</dbReference>
<dbReference type="SUPFAM" id="SSF55826">
    <property type="entry name" value="YbaK/ProRS associated domain"/>
    <property type="match status" value="1"/>
</dbReference>
<dbReference type="PROSITE" id="PS50862">
    <property type="entry name" value="AA_TRNA_LIGASE_II"/>
    <property type="match status" value="1"/>
</dbReference>
<evidence type="ECO:0000255" key="1">
    <source>
        <dbReference type="HAMAP-Rule" id="MF_01569"/>
    </source>
</evidence>
<organism>
    <name type="scientific">Streptococcus pneumoniae (strain P1031)</name>
    <dbReference type="NCBI Taxonomy" id="488223"/>
    <lineage>
        <taxon>Bacteria</taxon>
        <taxon>Bacillati</taxon>
        <taxon>Bacillota</taxon>
        <taxon>Bacilli</taxon>
        <taxon>Lactobacillales</taxon>
        <taxon>Streptococcaceae</taxon>
        <taxon>Streptococcus</taxon>
    </lineage>
</organism>
<proteinExistence type="inferred from homology"/>
<keyword id="KW-0030">Aminoacyl-tRNA synthetase</keyword>
<keyword id="KW-0067">ATP-binding</keyword>
<keyword id="KW-0963">Cytoplasm</keyword>
<keyword id="KW-0436">Ligase</keyword>
<keyword id="KW-0547">Nucleotide-binding</keyword>
<keyword id="KW-0648">Protein biosynthesis</keyword>
<gene>
    <name evidence="1" type="primary">proS</name>
    <name type="ordered locus">SPP_0314</name>
</gene>
<reference key="1">
    <citation type="journal article" date="2010" name="Genome Biol.">
        <title>Structure and dynamics of the pan-genome of Streptococcus pneumoniae and closely related species.</title>
        <authorList>
            <person name="Donati C."/>
            <person name="Hiller N.L."/>
            <person name="Tettelin H."/>
            <person name="Muzzi A."/>
            <person name="Croucher N.J."/>
            <person name="Angiuoli S.V."/>
            <person name="Oggioni M."/>
            <person name="Dunning Hotopp J.C."/>
            <person name="Hu F.Z."/>
            <person name="Riley D.R."/>
            <person name="Covacci A."/>
            <person name="Mitchell T.J."/>
            <person name="Bentley S.D."/>
            <person name="Kilian M."/>
            <person name="Ehrlich G.D."/>
            <person name="Rappuoli R."/>
            <person name="Moxon E.R."/>
            <person name="Masignani V."/>
        </authorList>
    </citation>
    <scope>NUCLEOTIDE SEQUENCE [LARGE SCALE GENOMIC DNA]</scope>
    <source>
        <strain>P1031</strain>
    </source>
</reference>
<comment type="function">
    <text evidence="1">Catalyzes the attachment of proline to tRNA(Pro) in a two-step reaction: proline is first activated by ATP to form Pro-AMP and then transferred to the acceptor end of tRNA(Pro). As ProRS can inadvertently accommodate and process non-cognate amino acids such as alanine and cysteine, to avoid such errors it has two additional distinct editing activities against alanine. One activity is designated as 'pretransfer' editing and involves the tRNA(Pro)-independent hydrolysis of activated Ala-AMP. The other activity is designated 'posttransfer' editing and involves deacylation of mischarged Ala-tRNA(Pro). The misacylated Cys-tRNA(Pro) is not edited by ProRS.</text>
</comment>
<comment type="catalytic activity">
    <reaction evidence="1">
        <text>tRNA(Pro) + L-proline + ATP = L-prolyl-tRNA(Pro) + AMP + diphosphate</text>
        <dbReference type="Rhea" id="RHEA:14305"/>
        <dbReference type="Rhea" id="RHEA-COMP:9700"/>
        <dbReference type="Rhea" id="RHEA-COMP:9702"/>
        <dbReference type="ChEBI" id="CHEBI:30616"/>
        <dbReference type="ChEBI" id="CHEBI:33019"/>
        <dbReference type="ChEBI" id="CHEBI:60039"/>
        <dbReference type="ChEBI" id="CHEBI:78442"/>
        <dbReference type="ChEBI" id="CHEBI:78532"/>
        <dbReference type="ChEBI" id="CHEBI:456215"/>
        <dbReference type="EC" id="6.1.1.15"/>
    </reaction>
</comment>
<comment type="subunit">
    <text evidence="1">Homodimer.</text>
</comment>
<comment type="subcellular location">
    <subcellularLocation>
        <location evidence="1">Cytoplasm</location>
    </subcellularLocation>
</comment>
<comment type="domain">
    <text evidence="1">Consists of three domains: the N-terminal catalytic domain, the editing domain and the C-terminal anticodon-binding domain.</text>
</comment>
<comment type="similarity">
    <text evidence="1">Belongs to the class-II aminoacyl-tRNA synthetase family. ProS type 1 subfamily.</text>
</comment>
<accession>C1CIE5</accession>
<protein>
    <recommendedName>
        <fullName evidence="1">Proline--tRNA ligase</fullName>
        <ecNumber evidence="1">6.1.1.15</ecNumber>
    </recommendedName>
    <alternativeName>
        <fullName evidence="1">Prolyl-tRNA synthetase</fullName>
        <shortName evidence="1">ProRS</shortName>
    </alternativeName>
</protein>
<feature type="chain" id="PRO_1000185517" description="Proline--tRNA ligase">
    <location>
        <begin position="1"/>
        <end position="617"/>
    </location>
</feature>
<name>SYP_STRZP</name>